<keyword id="KW-1185">Reference proteome</keyword>
<keyword id="KW-0687">Ribonucleoprotein</keyword>
<keyword id="KW-0689">Ribosomal protein</keyword>
<comment type="similarity">
    <text evidence="1">Belongs to the bacterial ribosomal protein bL28 family.</text>
</comment>
<reference key="1">
    <citation type="journal article" date="2008" name="Science">
        <title>Genome of an endosymbiont coupling N2 fixation to cellulolysis within RT protist cells in termite gut.</title>
        <authorList>
            <person name="Hongoh Y."/>
            <person name="Sharma V.K."/>
            <person name="Prakash T."/>
            <person name="Noda S."/>
            <person name="Toh H."/>
            <person name="Taylor T.D."/>
            <person name="Kudo T."/>
            <person name="Sakaki Y."/>
            <person name="Toyoda A."/>
            <person name="Hattori M."/>
            <person name="Ohkuma M."/>
        </authorList>
    </citation>
    <scope>NUCLEOTIDE SEQUENCE [LARGE SCALE GENOMIC DNA]</scope>
</reference>
<evidence type="ECO:0000255" key="1">
    <source>
        <dbReference type="HAMAP-Rule" id="MF_00373"/>
    </source>
</evidence>
<evidence type="ECO:0000256" key="2">
    <source>
        <dbReference type="SAM" id="MobiDB-lite"/>
    </source>
</evidence>
<evidence type="ECO:0000305" key="3"/>
<name>RL28_AZOPC</name>
<dbReference type="EMBL" id="AP010656">
    <property type="protein sequence ID" value="BAG83389.1"/>
    <property type="molecule type" value="Genomic_DNA"/>
</dbReference>
<dbReference type="RefSeq" id="WP_012573150.1">
    <property type="nucleotide sequence ID" value="NC_011565.1"/>
</dbReference>
<dbReference type="SMR" id="B6YQB7"/>
<dbReference type="STRING" id="511995.CFPG_126"/>
<dbReference type="KEGG" id="aps:CFPG_126"/>
<dbReference type="eggNOG" id="COG0227">
    <property type="taxonomic scope" value="Bacteria"/>
</dbReference>
<dbReference type="HOGENOM" id="CLU_064548_3_1_10"/>
<dbReference type="OrthoDB" id="9805609at2"/>
<dbReference type="Proteomes" id="UP000000723">
    <property type="component" value="Chromosome"/>
</dbReference>
<dbReference type="GO" id="GO:1990904">
    <property type="term" value="C:ribonucleoprotein complex"/>
    <property type="evidence" value="ECO:0007669"/>
    <property type="project" value="UniProtKB-KW"/>
</dbReference>
<dbReference type="GO" id="GO:0005840">
    <property type="term" value="C:ribosome"/>
    <property type="evidence" value="ECO:0007669"/>
    <property type="project" value="UniProtKB-KW"/>
</dbReference>
<dbReference type="GO" id="GO:0003735">
    <property type="term" value="F:structural constituent of ribosome"/>
    <property type="evidence" value="ECO:0007669"/>
    <property type="project" value="InterPro"/>
</dbReference>
<dbReference type="GO" id="GO:0006412">
    <property type="term" value="P:translation"/>
    <property type="evidence" value="ECO:0007669"/>
    <property type="project" value="UniProtKB-UniRule"/>
</dbReference>
<dbReference type="Gene3D" id="2.30.170.40">
    <property type="entry name" value="Ribosomal protein L28/L24"/>
    <property type="match status" value="1"/>
</dbReference>
<dbReference type="HAMAP" id="MF_00373">
    <property type="entry name" value="Ribosomal_bL28"/>
    <property type="match status" value="1"/>
</dbReference>
<dbReference type="InterPro" id="IPR026569">
    <property type="entry name" value="Ribosomal_bL28"/>
</dbReference>
<dbReference type="InterPro" id="IPR034704">
    <property type="entry name" value="Ribosomal_bL28/bL31-like_sf"/>
</dbReference>
<dbReference type="InterPro" id="IPR001383">
    <property type="entry name" value="Ribosomal_bL28_bact-type"/>
</dbReference>
<dbReference type="InterPro" id="IPR037147">
    <property type="entry name" value="Ribosomal_bL28_sf"/>
</dbReference>
<dbReference type="NCBIfam" id="TIGR00009">
    <property type="entry name" value="L28"/>
    <property type="match status" value="1"/>
</dbReference>
<dbReference type="PANTHER" id="PTHR13528">
    <property type="entry name" value="39S RIBOSOMAL PROTEIN L28, MITOCHONDRIAL"/>
    <property type="match status" value="1"/>
</dbReference>
<dbReference type="PANTHER" id="PTHR13528:SF2">
    <property type="entry name" value="LARGE RIBOSOMAL SUBUNIT PROTEIN BL28M"/>
    <property type="match status" value="1"/>
</dbReference>
<dbReference type="Pfam" id="PF00830">
    <property type="entry name" value="Ribosomal_L28"/>
    <property type="match status" value="1"/>
</dbReference>
<dbReference type="SUPFAM" id="SSF143800">
    <property type="entry name" value="L28p-like"/>
    <property type="match status" value="1"/>
</dbReference>
<protein>
    <recommendedName>
        <fullName evidence="1">Large ribosomal subunit protein bL28</fullName>
    </recommendedName>
    <alternativeName>
        <fullName evidence="3">50S ribosomal protein L28</fullName>
    </alternativeName>
</protein>
<gene>
    <name evidence="1" type="primary">rpmB</name>
    <name type="ordered locus">CFPG_126</name>
</gene>
<feature type="chain" id="PRO_1000121580" description="Large ribosomal subunit protein bL28">
    <location>
        <begin position="1"/>
        <end position="80"/>
    </location>
</feature>
<feature type="region of interest" description="Disordered" evidence="2">
    <location>
        <begin position="1"/>
        <end position="21"/>
    </location>
</feature>
<accession>B6YQB7</accession>
<organism>
    <name type="scientific">Azobacteroides pseudotrichonymphae genomovar. CFP2</name>
    <dbReference type="NCBI Taxonomy" id="511995"/>
    <lineage>
        <taxon>Bacteria</taxon>
        <taxon>Pseudomonadati</taxon>
        <taxon>Bacteroidota</taxon>
        <taxon>Bacteroidia</taxon>
        <taxon>Bacteroidales</taxon>
        <taxon>Candidatus Azobacteroides</taxon>
    </lineage>
</organism>
<sequence>MSRICQITRKKSMKGNSVAHSNHKTRRKFNVNFFSKRFYWVEKDCWIKLNISANGLRTINKIGLDAAIKQASKKGYLIIQ</sequence>
<proteinExistence type="inferred from homology"/>